<reference key="1">
    <citation type="journal article" date="2004" name="Nat. Genet.">
        <title>Complete sequencing and characterization of 21,243 full-length human cDNAs.</title>
        <authorList>
            <person name="Ota T."/>
            <person name="Suzuki Y."/>
            <person name="Nishikawa T."/>
            <person name="Otsuki T."/>
            <person name="Sugiyama T."/>
            <person name="Irie R."/>
            <person name="Wakamatsu A."/>
            <person name="Hayashi K."/>
            <person name="Sato H."/>
            <person name="Nagai K."/>
            <person name="Kimura K."/>
            <person name="Makita H."/>
            <person name="Sekine M."/>
            <person name="Obayashi M."/>
            <person name="Nishi T."/>
            <person name="Shibahara T."/>
            <person name="Tanaka T."/>
            <person name="Ishii S."/>
            <person name="Yamamoto J."/>
            <person name="Saito K."/>
            <person name="Kawai Y."/>
            <person name="Isono Y."/>
            <person name="Nakamura Y."/>
            <person name="Nagahari K."/>
            <person name="Murakami K."/>
            <person name="Yasuda T."/>
            <person name="Iwayanagi T."/>
            <person name="Wagatsuma M."/>
            <person name="Shiratori A."/>
            <person name="Sudo H."/>
            <person name="Hosoiri T."/>
            <person name="Kaku Y."/>
            <person name="Kodaira H."/>
            <person name="Kondo H."/>
            <person name="Sugawara M."/>
            <person name="Takahashi M."/>
            <person name="Kanda K."/>
            <person name="Yokoi T."/>
            <person name="Furuya T."/>
            <person name="Kikkawa E."/>
            <person name="Omura Y."/>
            <person name="Abe K."/>
            <person name="Kamihara K."/>
            <person name="Katsuta N."/>
            <person name="Sato K."/>
            <person name="Tanikawa M."/>
            <person name="Yamazaki M."/>
            <person name="Ninomiya K."/>
            <person name="Ishibashi T."/>
            <person name="Yamashita H."/>
            <person name="Murakawa K."/>
            <person name="Fujimori K."/>
            <person name="Tanai H."/>
            <person name="Kimata M."/>
            <person name="Watanabe M."/>
            <person name="Hiraoka S."/>
            <person name="Chiba Y."/>
            <person name="Ishida S."/>
            <person name="Ono Y."/>
            <person name="Takiguchi S."/>
            <person name="Watanabe S."/>
            <person name="Yosida M."/>
            <person name="Hotuta T."/>
            <person name="Kusano J."/>
            <person name="Kanehori K."/>
            <person name="Takahashi-Fujii A."/>
            <person name="Hara H."/>
            <person name="Tanase T.-O."/>
            <person name="Nomura Y."/>
            <person name="Togiya S."/>
            <person name="Komai F."/>
            <person name="Hara R."/>
            <person name="Takeuchi K."/>
            <person name="Arita M."/>
            <person name="Imose N."/>
            <person name="Musashino K."/>
            <person name="Yuuki H."/>
            <person name="Oshima A."/>
            <person name="Sasaki N."/>
            <person name="Aotsuka S."/>
            <person name="Yoshikawa Y."/>
            <person name="Matsunawa H."/>
            <person name="Ichihara T."/>
            <person name="Shiohata N."/>
            <person name="Sano S."/>
            <person name="Moriya S."/>
            <person name="Momiyama H."/>
            <person name="Satoh N."/>
            <person name="Takami S."/>
            <person name="Terashima Y."/>
            <person name="Suzuki O."/>
            <person name="Nakagawa S."/>
            <person name="Senoh A."/>
            <person name="Mizoguchi H."/>
            <person name="Goto Y."/>
            <person name="Shimizu F."/>
            <person name="Wakebe H."/>
            <person name="Hishigaki H."/>
            <person name="Watanabe T."/>
            <person name="Sugiyama A."/>
            <person name="Takemoto M."/>
            <person name="Kawakami B."/>
            <person name="Yamazaki M."/>
            <person name="Watanabe K."/>
            <person name="Kumagai A."/>
            <person name="Itakura S."/>
            <person name="Fukuzumi Y."/>
            <person name="Fujimori Y."/>
            <person name="Komiyama M."/>
            <person name="Tashiro H."/>
            <person name="Tanigami A."/>
            <person name="Fujiwara T."/>
            <person name="Ono T."/>
            <person name="Yamada K."/>
            <person name="Fujii Y."/>
            <person name="Ozaki K."/>
            <person name="Hirao M."/>
            <person name="Ohmori Y."/>
            <person name="Kawabata A."/>
            <person name="Hikiji T."/>
            <person name="Kobatake N."/>
            <person name="Inagaki H."/>
            <person name="Ikema Y."/>
            <person name="Okamoto S."/>
            <person name="Okitani R."/>
            <person name="Kawakami T."/>
            <person name="Noguchi S."/>
            <person name="Itoh T."/>
            <person name="Shigeta K."/>
            <person name="Senba T."/>
            <person name="Matsumura K."/>
            <person name="Nakajima Y."/>
            <person name="Mizuno T."/>
            <person name="Morinaga M."/>
            <person name="Sasaki M."/>
            <person name="Togashi T."/>
            <person name="Oyama M."/>
            <person name="Hata H."/>
            <person name="Watanabe M."/>
            <person name="Komatsu T."/>
            <person name="Mizushima-Sugano J."/>
            <person name="Satoh T."/>
            <person name="Shirai Y."/>
            <person name="Takahashi Y."/>
            <person name="Nakagawa K."/>
            <person name="Okumura K."/>
            <person name="Nagase T."/>
            <person name="Nomura N."/>
            <person name="Kikuchi H."/>
            <person name="Masuho Y."/>
            <person name="Yamashita R."/>
            <person name="Nakai K."/>
            <person name="Yada T."/>
            <person name="Nakamura Y."/>
            <person name="Ohara O."/>
            <person name="Isogai T."/>
            <person name="Sugano S."/>
        </authorList>
    </citation>
    <scope>NUCLEOTIDE SEQUENCE [LARGE SCALE MRNA]</scope>
    <scope>VARIANTS GLU-48 AND ARG-123</scope>
    <source>
        <tissue>Neuroblastoma</tissue>
    </source>
</reference>
<reference key="2">
    <citation type="journal article" date="2006" name="Nature">
        <title>The DNA sequence and biological annotation of human chromosome 1.</title>
        <authorList>
            <person name="Gregory S.G."/>
            <person name="Barlow K.F."/>
            <person name="McLay K.E."/>
            <person name="Kaul R."/>
            <person name="Swarbreck D."/>
            <person name="Dunham A."/>
            <person name="Scott C.E."/>
            <person name="Howe K.L."/>
            <person name="Woodfine K."/>
            <person name="Spencer C.C.A."/>
            <person name="Jones M.C."/>
            <person name="Gillson C."/>
            <person name="Searle S."/>
            <person name="Zhou Y."/>
            <person name="Kokocinski F."/>
            <person name="McDonald L."/>
            <person name="Evans R."/>
            <person name="Phillips K."/>
            <person name="Atkinson A."/>
            <person name="Cooper R."/>
            <person name="Jones C."/>
            <person name="Hall R.E."/>
            <person name="Andrews T.D."/>
            <person name="Lloyd C."/>
            <person name="Ainscough R."/>
            <person name="Almeida J.P."/>
            <person name="Ambrose K.D."/>
            <person name="Anderson F."/>
            <person name="Andrew R.W."/>
            <person name="Ashwell R.I.S."/>
            <person name="Aubin K."/>
            <person name="Babbage A.K."/>
            <person name="Bagguley C.L."/>
            <person name="Bailey J."/>
            <person name="Beasley H."/>
            <person name="Bethel G."/>
            <person name="Bird C.P."/>
            <person name="Bray-Allen S."/>
            <person name="Brown J.Y."/>
            <person name="Brown A.J."/>
            <person name="Buckley D."/>
            <person name="Burton J."/>
            <person name="Bye J."/>
            <person name="Carder C."/>
            <person name="Chapman J.C."/>
            <person name="Clark S.Y."/>
            <person name="Clarke G."/>
            <person name="Clee C."/>
            <person name="Cobley V."/>
            <person name="Collier R.E."/>
            <person name="Corby N."/>
            <person name="Coville G.J."/>
            <person name="Davies J."/>
            <person name="Deadman R."/>
            <person name="Dunn M."/>
            <person name="Earthrowl M."/>
            <person name="Ellington A.G."/>
            <person name="Errington H."/>
            <person name="Frankish A."/>
            <person name="Frankland J."/>
            <person name="French L."/>
            <person name="Garner P."/>
            <person name="Garnett J."/>
            <person name="Gay L."/>
            <person name="Ghori M.R.J."/>
            <person name="Gibson R."/>
            <person name="Gilby L.M."/>
            <person name="Gillett W."/>
            <person name="Glithero R.J."/>
            <person name="Grafham D.V."/>
            <person name="Griffiths C."/>
            <person name="Griffiths-Jones S."/>
            <person name="Grocock R."/>
            <person name="Hammond S."/>
            <person name="Harrison E.S.I."/>
            <person name="Hart E."/>
            <person name="Haugen E."/>
            <person name="Heath P.D."/>
            <person name="Holmes S."/>
            <person name="Holt K."/>
            <person name="Howden P.J."/>
            <person name="Hunt A.R."/>
            <person name="Hunt S.E."/>
            <person name="Hunter G."/>
            <person name="Isherwood J."/>
            <person name="James R."/>
            <person name="Johnson C."/>
            <person name="Johnson D."/>
            <person name="Joy A."/>
            <person name="Kay M."/>
            <person name="Kershaw J.K."/>
            <person name="Kibukawa M."/>
            <person name="Kimberley A.M."/>
            <person name="King A."/>
            <person name="Knights A.J."/>
            <person name="Lad H."/>
            <person name="Laird G."/>
            <person name="Lawlor S."/>
            <person name="Leongamornlert D.A."/>
            <person name="Lloyd D.M."/>
            <person name="Loveland J."/>
            <person name="Lovell J."/>
            <person name="Lush M.J."/>
            <person name="Lyne R."/>
            <person name="Martin S."/>
            <person name="Mashreghi-Mohammadi M."/>
            <person name="Matthews L."/>
            <person name="Matthews N.S.W."/>
            <person name="McLaren S."/>
            <person name="Milne S."/>
            <person name="Mistry S."/>
            <person name="Moore M.J.F."/>
            <person name="Nickerson T."/>
            <person name="O'Dell C.N."/>
            <person name="Oliver K."/>
            <person name="Palmeiri A."/>
            <person name="Palmer S.A."/>
            <person name="Parker A."/>
            <person name="Patel D."/>
            <person name="Pearce A.V."/>
            <person name="Peck A.I."/>
            <person name="Pelan S."/>
            <person name="Phelps K."/>
            <person name="Phillimore B.J."/>
            <person name="Plumb R."/>
            <person name="Rajan J."/>
            <person name="Raymond C."/>
            <person name="Rouse G."/>
            <person name="Saenphimmachak C."/>
            <person name="Sehra H.K."/>
            <person name="Sheridan E."/>
            <person name="Shownkeen R."/>
            <person name="Sims S."/>
            <person name="Skuce C.D."/>
            <person name="Smith M."/>
            <person name="Steward C."/>
            <person name="Subramanian S."/>
            <person name="Sycamore N."/>
            <person name="Tracey A."/>
            <person name="Tromans A."/>
            <person name="Van Helmond Z."/>
            <person name="Wall M."/>
            <person name="Wallis J.M."/>
            <person name="White S."/>
            <person name="Whitehead S.L."/>
            <person name="Wilkinson J.E."/>
            <person name="Willey D.L."/>
            <person name="Williams H."/>
            <person name="Wilming L."/>
            <person name="Wray P.W."/>
            <person name="Wu Z."/>
            <person name="Coulson A."/>
            <person name="Vaudin M."/>
            <person name="Sulston J.E."/>
            <person name="Durbin R.M."/>
            <person name="Hubbard T."/>
            <person name="Wooster R."/>
            <person name="Dunham I."/>
            <person name="Carter N.P."/>
            <person name="McVean G."/>
            <person name="Ross M.T."/>
            <person name="Harrow J."/>
            <person name="Olson M.V."/>
            <person name="Beck S."/>
            <person name="Rogers J."/>
            <person name="Bentley D.R."/>
        </authorList>
    </citation>
    <scope>NUCLEOTIDE SEQUENCE [LARGE SCALE GENOMIC DNA]</scope>
</reference>
<reference key="3">
    <citation type="journal article" date="2004" name="Genome Res.">
        <title>The status, quality, and expansion of the NIH full-length cDNA project: the Mammalian Gene Collection (MGC).</title>
        <authorList>
            <consortium name="The MGC Project Team"/>
        </authorList>
    </citation>
    <scope>NUCLEOTIDE SEQUENCE [LARGE SCALE MRNA]</scope>
    <scope>VARIANTS GLU-48; GLN-107; ARG-123 AND ASP-226</scope>
    <source>
        <tissue>Brain</tissue>
        <tissue>Uterus</tissue>
    </source>
</reference>
<evidence type="ECO:0000256" key="1">
    <source>
        <dbReference type="SAM" id="MobiDB-lite"/>
    </source>
</evidence>
<evidence type="ECO:0000269" key="2">
    <source>
    </source>
</evidence>
<evidence type="ECO:0000269" key="3">
    <source>
    </source>
</evidence>
<evidence type="ECO:0000305" key="4"/>
<gene>
    <name type="primary">FAM131C</name>
    <name type="synonym">C1orf117</name>
</gene>
<feature type="chain" id="PRO_0000280401" description="Protein FAM131C">
    <location>
        <begin position="1"/>
        <end position="280"/>
    </location>
</feature>
<feature type="region of interest" description="Disordered" evidence="1">
    <location>
        <begin position="195"/>
        <end position="280"/>
    </location>
</feature>
<feature type="compositionally biased region" description="Polar residues" evidence="1">
    <location>
        <begin position="197"/>
        <end position="211"/>
    </location>
</feature>
<feature type="compositionally biased region" description="Pro residues" evidence="1">
    <location>
        <begin position="215"/>
        <end position="227"/>
    </location>
</feature>
<feature type="sequence variant" id="VAR_031130" description="In dbSNP:rs2863458." evidence="2 3">
    <original>K</original>
    <variation>E</variation>
    <location>
        <position position="48"/>
    </location>
</feature>
<feature type="sequence variant" id="VAR_031131" description="In dbSNP:rs71510977." evidence="3">
    <original>R</original>
    <variation>Q</variation>
    <location>
        <position position="107"/>
    </location>
</feature>
<feature type="sequence variant" id="VAR_031132" description="In dbSNP:rs11576236." evidence="2 3">
    <original>P</original>
    <variation>R</variation>
    <location>
        <position position="123"/>
    </location>
</feature>
<feature type="sequence variant" id="VAR_031133" description="In dbSNP:rs1832151.">
    <original>S</original>
    <variation>I</variation>
    <location>
        <position position="215"/>
    </location>
</feature>
<feature type="sequence variant" id="VAR_031134" description="In dbSNP:rs17853749." evidence="3">
    <original>E</original>
    <variation>D</variation>
    <location>
        <position position="226"/>
    </location>
</feature>
<feature type="sequence conflict" description="In Ref. 1; BAC04282." evidence="4" ref="1">
    <original>M</original>
    <variation>I</variation>
    <location>
        <position position="19"/>
    </location>
</feature>
<dbReference type="EMBL" id="AK094085">
    <property type="protein sequence ID" value="BAC04282.1"/>
    <property type="molecule type" value="mRNA"/>
</dbReference>
<dbReference type="EMBL" id="AL355994">
    <property type="status" value="NOT_ANNOTATED_CDS"/>
    <property type="molecule type" value="Genomic_DNA"/>
</dbReference>
<dbReference type="EMBL" id="BC016848">
    <property type="protein sequence ID" value="AAH16848.1"/>
    <property type="molecule type" value="mRNA"/>
</dbReference>
<dbReference type="EMBL" id="BC037394">
    <property type="protein sequence ID" value="AAH37394.1"/>
    <property type="molecule type" value="mRNA"/>
</dbReference>
<dbReference type="CCDS" id="CCDS41270.1"/>
<dbReference type="RefSeq" id="NP_872429.2">
    <property type="nucleotide sequence ID" value="NM_182623.3"/>
</dbReference>
<dbReference type="BioGRID" id="131523">
    <property type="interactions" value="19"/>
</dbReference>
<dbReference type="FunCoup" id="Q96AQ9">
    <property type="interactions" value="9"/>
</dbReference>
<dbReference type="IntAct" id="Q96AQ9">
    <property type="interactions" value="12"/>
</dbReference>
<dbReference type="STRING" id="9606.ENSP00000364814"/>
<dbReference type="iPTMnet" id="Q96AQ9"/>
<dbReference type="PhosphoSitePlus" id="Q96AQ9"/>
<dbReference type="BioMuta" id="FAM131C"/>
<dbReference type="DMDM" id="134035394"/>
<dbReference type="MassIVE" id="Q96AQ9"/>
<dbReference type="PaxDb" id="9606-ENSP00000364814"/>
<dbReference type="PeptideAtlas" id="Q96AQ9"/>
<dbReference type="Antibodypedia" id="52952">
    <property type="antibodies" value="83 antibodies from 12 providers"/>
</dbReference>
<dbReference type="DNASU" id="348487"/>
<dbReference type="Ensembl" id="ENST00000375662.5">
    <property type="protein sequence ID" value="ENSP00000364814.4"/>
    <property type="gene ID" value="ENSG00000185519.9"/>
</dbReference>
<dbReference type="GeneID" id="348487"/>
<dbReference type="KEGG" id="hsa:348487"/>
<dbReference type="MANE-Select" id="ENST00000375662.5">
    <property type="protein sequence ID" value="ENSP00000364814.4"/>
    <property type="RefSeq nucleotide sequence ID" value="NM_182623.3"/>
    <property type="RefSeq protein sequence ID" value="NP_872429.2"/>
</dbReference>
<dbReference type="UCSC" id="uc001axz.5">
    <property type="organism name" value="human"/>
</dbReference>
<dbReference type="AGR" id="HGNC:26717"/>
<dbReference type="CTD" id="348487"/>
<dbReference type="GeneCards" id="FAM131C"/>
<dbReference type="HGNC" id="HGNC:26717">
    <property type="gene designation" value="FAM131C"/>
</dbReference>
<dbReference type="HPA" id="ENSG00000185519">
    <property type="expression patterns" value="Tissue enriched (brain)"/>
</dbReference>
<dbReference type="neXtProt" id="NX_Q96AQ9"/>
<dbReference type="OpenTargets" id="ENSG00000185519"/>
<dbReference type="PharmGKB" id="PA162386082"/>
<dbReference type="VEuPathDB" id="HostDB:ENSG00000185519"/>
<dbReference type="eggNOG" id="ENOG502S1N6">
    <property type="taxonomic scope" value="Eukaryota"/>
</dbReference>
<dbReference type="GeneTree" id="ENSGT00950000183106"/>
<dbReference type="HOGENOM" id="CLU_092457_0_0_1"/>
<dbReference type="InParanoid" id="Q96AQ9"/>
<dbReference type="OMA" id="EDERYCC"/>
<dbReference type="OrthoDB" id="8881031at2759"/>
<dbReference type="PAN-GO" id="Q96AQ9">
    <property type="GO annotations" value="0 GO annotations based on evolutionary models"/>
</dbReference>
<dbReference type="PhylomeDB" id="Q96AQ9"/>
<dbReference type="TreeFam" id="TF331537"/>
<dbReference type="PathwayCommons" id="Q96AQ9"/>
<dbReference type="SignaLink" id="Q96AQ9"/>
<dbReference type="BioGRID-ORCS" id="348487">
    <property type="hits" value="8 hits in 1150 CRISPR screens"/>
</dbReference>
<dbReference type="ChiTaRS" id="FAM131C">
    <property type="organism name" value="human"/>
</dbReference>
<dbReference type="GenomeRNAi" id="348487"/>
<dbReference type="Pharos" id="Q96AQ9">
    <property type="development level" value="Tdark"/>
</dbReference>
<dbReference type="PRO" id="PR:Q96AQ9"/>
<dbReference type="Proteomes" id="UP000005640">
    <property type="component" value="Chromosome 1"/>
</dbReference>
<dbReference type="RNAct" id="Q96AQ9">
    <property type="molecule type" value="protein"/>
</dbReference>
<dbReference type="Bgee" id="ENSG00000185519">
    <property type="expression patterns" value="Expressed in cerebellar hemisphere and 84 other cell types or tissues"/>
</dbReference>
<dbReference type="InterPro" id="IPR026782">
    <property type="entry name" value="FAM131"/>
</dbReference>
<dbReference type="PANTHER" id="PTHR15736">
    <property type="entry name" value="PROTEIN FAM131B-RELATED"/>
    <property type="match status" value="1"/>
</dbReference>
<dbReference type="PANTHER" id="PTHR15736:SF2">
    <property type="entry name" value="PROTEIN FAM131C"/>
    <property type="match status" value="1"/>
</dbReference>
<dbReference type="Pfam" id="PF15010">
    <property type="entry name" value="FAM131"/>
    <property type="match status" value="1"/>
</dbReference>
<organism>
    <name type="scientific">Homo sapiens</name>
    <name type="common">Human</name>
    <dbReference type="NCBI Taxonomy" id="9606"/>
    <lineage>
        <taxon>Eukaryota</taxon>
        <taxon>Metazoa</taxon>
        <taxon>Chordata</taxon>
        <taxon>Craniata</taxon>
        <taxon>Vertebrata</taxon>
        <taxon>Euteleostomi</taxon>
        <taxon>Mammalia</taxon>
        <taxon>Eutheria</taxon>
        <taxon>Euarchontoglires</taxon>
        <taxon>Primates</taxon>
        <taxon>Haplorrhini</taxon>
        <taxon>Catarrhini</taxon>
        <taxon>Hominidae</taxon>
        <taxon>Homo</taxon>
    </lineage>
</organism>
<sequence>MGSCVSRDLFTSAHKNCPMPQGADPLNPDLPSGRTPTVAPDCVIGKDKQMDFCWDPWQRCFQTTNGYLSDSRSRPGNYNVAALATSSLVGVVQSIKDHITKPTAMARGRVAHLIEWKGWSAQPAGWELSPAEDEHYCCLPDELREARFAAGVAEQFAITEATLSAWSSLDEEELHPENSPQGIVQLQDLESIYLQDSLPSGPSQDDSLQAFSSPSPSPDSCPSPEEPPSTAGIPQPPSPELQHRRRLPGAQGPEGGTHPPGSLPSMDSGSLWEEDEVFYN</sequence>
<keyword id="KW-1267">Proteomics identification</keyword>
<keyword id="KW-1185">Reference proteome</keyword>
<name>F131C_HUMAN</name>
<comment type="interaction">
    <interactant intactId="EBI-741921">
        <id>Q96AQ9</id>
    </interactant>
    <interactant intactId="EBI-747754">
        <id>P28799</id>
        <label>GRN</label>
    </interactant>
    <organismsDiffer>false</organismsDiffer>
    <experiments>4</experiments>
</comment>
<comment type="interaction">
    <interactant intactId="EBI-741921">
        <id>Q96AQ9</id>
    </interactant>
    <interactant intactId="EBI-25860013">
        <id>P28799-2</id>
        <label>GRN</label>
    </interactant>
    <organismsDiffer>false</organismsDiffer>
    <experiments>3</experiments>
</comment>
<comment type="interaction">
    <interactant intactId="EBI-741921">
        <id>Q96AQ9</id>
    </interactant>
    <interactant intactId="EBI-744820">
        <id>Q9UM19</id>
        <label>HPCAL4</label>
    </interactant>
    <organismsDiffer>false</organismsDiffer>
    <experiments>6</experiments>
</comment>
<comment type="interaction">
    <interactant intactId="EBI-741921">
        <id>Q96AQ9</id>
    </interactant>
    <interactant intactId="EBI-742259">
        <id>Q8TAP4</id>
        <label>LMO3</label>
    </interactant>
    <organismsDiffer>false</organismsDiffer>
    <experiments>3</experiments>
</comment>
<comment type="interaction">
    <interactant intactId="EBI-741921">
        <id>Q96AQ9</id>
    </interactant>
    <interactant intactId="EBI-740943">
        <id>P62760</id>
        <label>VSNL1</label>
    </interactant>
    <organismsDiffer>false</organismsDiffer>
    <experiments>7</experiments>
</comment>
<comment type="similarity">
    <text evidence="4">Belongs to the FAM131 family.</text>
</comment>
<protein>
    <recommendedName>
        <fullName>Protein FAM131C</fullName>
    </recommendedName>
</protein>
<accession>Q96AQ9</accession>
<accession>Q5T5Q5</accession>
<accession>Q8N3X3</accession>
<accession>Q8N9P9</accession>
<proteinExistence type="evidence at protein level"/>